<comment type="function">
    <text evidence="1">DNA-dependent RNA polymerase catalyzes the transcription of DNA into RNA using the four ribonucleoside triphosphates as substrates. Specific core component of RNA polymerase III which synthesizes small RNAs, such as 5S rRNA and tRNAs (By similarity).</text>
</comment>
<comment type="subunit">
    <text evidence="1">Component of the RNA polymerase III (Pol III) complex consisting of 17 subunits.</text>
</comment>
<comment type="subcellular location">
    <subcellularLocation>
        <location evidence="1">Nucleus</location>
    </subcellularLocation>
</comment>
<comment type="similarity">
    <text evidence="3">Belongs to the RNA polymerase beta chain family.</text>
</comment>
<reference key="1">
    <citation type="journal article" date="2004" name="Nature">
        <title>Genome evolution in yeasts.</title>
        <authorList>
            <person name="Dujon B."/>
            <person name="Sherman D."/>
            <person name="Fischer G."/>
            <person name="Durrens P."/>
            <person name="Casaregola S."/>
            <person name="Lafontaine I."/>
            <person name="de Montigny J."/>
            <person name="Marck C."/>
            <person name="Neuveglise C."/>
            <person name="Talla E."/>
            <person name="Goffard N."/>
            <person name="Frangeul L."/>
            <person name="Aigle M."/>
            <person name="Anthouard V."/>
            <person name="Babour A."/>
            <person name="Barbe V."/>
            <person name="Barnay S."/>
            <person name="Blanchin S."/>
            <person name="Beckerich J.-M."/>
            <person name="Beyne E."/>
            <person name="Bleykasten C."/>
            <person name="Boisrame A."/>
            <person name="Boyer J."/>
            <person name="Cattolico L."/>
            <person name="Confanioleri F."/>
            <person name="de Daruvar A."/>
            <person name="Despons L."/>
            <person name="Fabre E."/>
            <person name="Fairhead C."/>
            <person name="Ferry-Dumazet H."/>
            <person name="Groppi A."/>
            <person name="Hantraye F."/>
            <person name="Hennequin C."/>
            <person name="Jauniaux N."/>
            <person name="Joyet P."/>
            <person name="Kachouri R."/>
            <person name="Kerrest A."/>
            <person name="Koszul R."/>
            <person name="Lemaire M."/>
            <person name="Lesur I."/>
            <person name="Ma L."/>
            <person name="Muller H."/>
            <person name="Nicaud J.-M."/>
            <person name="Nikolski M."/>
            <person name="Oztas S."/>
            <person name="Ozier-Kalogeropoulos O."/>
            <person name="Pellenz S."/>
            <person name="Potier S."/>
            <person name="Richard G.-F."/>
            <person name="Straub M.-L."/>
            <person name="Suleau A."/>
            <person name="Swennen D."/>
            <person name="Tekaia F."/>
            <person name="Wesolowski-Louvel M."/>
            <person name="Westhof E."/>
            <person name="Wirth B."/>
            <person name="Zeniou-Meyer M."/>
            <person name="Zivanovic Y."/>
            <person name="Bolotin-Fukuhara M."/>
            <person name="Thierry A."/>
            <person name="Bouchier C."/>
            <person name="Caudron B."/>
            <person name="Scarpelli C."/>
            <person name="Gaillardin C."/>
            <person name="Weissenbach J."/>
            <person name="Wincker P."/>
            <person name="Souciet J.-L."/>
        </authorList>
    </citation>
    <scope>NUCLEOTIDE SEQUENCE [LARGE SCALE GENOMIC DNA]</scope>
    <source>
        <strain>CLIB 122 / E 150</strain>
    </source>
</reference>
<proteinExistence type="inferred from homology"/>
<gene>
    <name type="primary">RPC82</name>
    <name type="synonym">RPC3</name>
    <name type="ordered locus">YALI0F08635g</name>
</gene>
<dbReference type="EMBL" id="CR382132">
    <property type="protein sequence ID" value="CAG77977.1"/>
    <property type="molecule type" value="Genomic_DNA"/>
</dbReference>
<dbReference type="RefSeq" id="XP_505170.1">
    <property type="nucleotide sequence ID" value="XM_505170.1"/>
</dbReference>
<dbReference type="SMR" id="Q6C2E2"/>
<dbReference type="FunCoup" id="Q6C2E2">
    <property type="interactions" value="491"/>
</dbReference>
<dbReference type="STRING" id="284591.Q6C2E2"/>
<dbReference type="EnsemblFungi" id="CAG77977">
    <property type="protein sequence ID" value="CAG77977"/>
    <property type="gene ID" value="YALI0_F08635g"/>
</dbReference>
<dbReference type="KEGG" id="yli:2908482"/>
<dbReference type="VEuPathDB" id="FungiDB:YALI0_F08635g"/>
<dbReference type="HOGENOM" id="CLU_023294_0_0_1"/>
<dbReference type="InParanoid" id="Q6C2E2"/>
<dbReference type="OMA" id="KHRFVRH"/>
<dbReference type="OrthoDB" id="9968at4891"/>
<dbReference type="Proteomes" id="UP000001300">
    <property type="component" value="Chromosome F"/>
</dbReference>
<dbReference type="GO" id="GO:0005666">
    <property type="term" value="C:RNA polymerase III complex"/>
    <property type="evidence" value="ECO:0000318"/>
    <property type="project" value="GO_Central"/>
</dbReference>
<dbReference type="GO" id="GO:0003697">
    <property type="term" value="F:single-stranded DNA binding"/>
    <property type="evidence" value="ECO:0007669"/>
    <property type="project" value="InterPro"/>
</dbReference>
<dbReference type="GO" id="GO:0006351">
    <property type="term" value="P:DNA-templated transcription"/>
    <property type="evidence" value="ECO:0007669"/>
    <property type="project" value="InterPro"/>
</dbReference>
<dbReference type="Gene3D" id="1.10.10.10">
    <property type="entry name" value="Winged helix-like DNA-binding domain superfamily/Winged helix DNA-binding domain"/>
    <property type="match status" value="3"/>
</dbReference>
<dbReference type="InterPro" id="IPR055207">
    <property type="entry name" value="POLR3C_WHD"/>
</dbReference>
<dbReference type="InterPro" id="IPR013197">
    <property type="entry name" value="RNA_pol_III_RPC82-rel_HTH"/>
</dbReference>
<dbReference type="InterPro" id="IPR008806">
    <property type="entry name" value="RNA_pol_III_Rpc82_C"/>
</dbReference>
<dbReference type="InterPro" id="IPR039748">
    <property type="entry name" value="RPC3"/>
</dbReference>
<dbReference type="InterPro" id="IPR036388">
    <property type="entry name" value="WH-like_DNA-bd_sf"/>
</dbReference>
<dbReference type="PANTHER" id="PTHR12949:SF0">
    <property type="entry name" value="DNA-DIRECTED RNA POLYMERASE III SUBUNIT RPC3"/>
    <property type="match status" value="1"/>
</dbReference>
<dbReference type="PANTHER" id="PTHR12949">
    <property type="entry name" value="RNA POLYMERASE III DNA DIRECTED -RELATED"/>
    <property type="match status" value="1"/>
</dbReference>
<dbReference type="Pfam" id="PF08221">
    <property type="entry name" value="HTH_9"/>
    <property type="match status" value="1"/>
</dbReference>
<dbReference type="Pfam" id="PF22536">
    <property type="entry name" value="POLR3C_WHD"/>
    <property type="match status" value="1"/>
</dbReference>
<dbReference type="Pfam" id="PF05645">
    <property type="entry name" value="RNA_pol_Rpc82"/>
    <property type="match status" value="1"/>
</dbReference>
<sequence length="599" mass="67329">MSELHNPDQSSRALFDLCRVLLKGIYGELSAVLVGSLLDYGRQTAAELAKTTKLPLSAVHSGLAALVQNRFVLYWANDRKSGRDTDDIGESSSIHYVANWKEIYQVVRAGGMVDAVRKDFGKGPGGKSNPESGERCAEIAQNLLVYGHMRVADYLEATPEHDRDSVEASIAVMLRKRFLVPVQAWQFKPETDLYARMFRDHLSKLPLSMAESARKNQAAVSAKTELERMQEERNSLNLGFVSGSVARTKGVPVLNRAEKLDHQAVLCANPDKFLVIARNEELAKLAEERCGKTAAEVYRQCLSKYVGRLHSCTQDTSPGAEFNITSMEIAKTIDPRLDGLRPRGKGSRSVSPRPQSKRVKTEEGYTKTGDYDEKEVDVEEDMEEELSGVALATAVSKQMQILAASPLKFVQSVGTKGGGEWYVNFKEATECLRGARYEQIIQWKYGRVAKRLLRAVKDKGKVDEKLLTNIALLPVKEILNHLHDLHSVGALDVQELPRTADRAASRTIFLWHHRANRAYSLISQDIYKSLSRCFERVAAERAKLPILLSKLQREDVKGHEDEFLTEQEKADLKGLRMREEKLLVQMNRLDGLIRVFRDY</sequence>
<name>RPC3_YARLI</name>
<keyword id="KW-0240">DNA-directed RNA polymerase</keyword>
<keyword id="KW-0539">Nucleus</keyword>
<keyword id="KW-1185">Reference proteome</keyword>
<keyword id="KW-0804">Transcription</keyword>
<keyword id="KW-0862">Zinc</keyword>
<evidence type="ECO:0000250" key="1"/>
<evidence type="ECO:0000256" key="2">
    <source>
        <dbReference type="SAM" id="MobiDB-lite"/>
    </source>
</evidence>
<evidence type="ECO:0000305" key="3"/>
<protein>
    <recommendedName>
        <fullName>DNA-directed RNA polymerase III subunit RPC3</fullName>
        <shortName>RNA polymerase III subunit C3</shortName>
    </recommendedName>
    <alternativeName>
        <fullName>C82</fullName>
    </alternativeName>
</protein>
<accession>Q6C2E2</accession>
<feature type="chain" id="PRO_0000351042" description="DNA-directed RNA polymerase III subunit RPC3">
    <location>
        <begin position="1"/>
        <end position="599"/>
    </location>
</feature>
<feature type="region of interest" description="Disordered" evidence="2">
    <location>
        <begin position="335"/>
        <end position="371"/>
    </location>
</feature>
<feature type="region of interest" description="Leucine-zipper">
    <location>
        <begin position="526"/>
        <end position="547"/>
    </location>
</feature>
<feature type="compositionally biased region" description="Basic and acidic residues" evidence="2">
    <location>
        <begin position="359"/>
        <end position="371"/>
    </location>
</feature>
<organism>
    <name type="scientific">Yarrowia lipolytica (strain CLIB 122 / E 150)</name>
    <name type="common">Yeast</name>
    <name type="synonym">Candida lipolytica</name>
    <dbReference type="NCBI Taxonomy" id="284591"/>
    <lineage>
        <taxon>Eukaryota</taxon>
        <taxon>Fungi</taxon>
        <taxon>Dikarya</taxon>
        <taxon>Ascomycota</taxon>
        <taxon>Saccharomycotina</taxon>
        <taxon>Dipodascomycetes</taxon>
        <taxon>Dipodascales</taxon>
        <taxon>Dipodascales incertae sedis</taxon>
        <taxon>Yarrowia</taxon>
    </lineage>
</organism>